<organism>
    <name type="scientific">Bordetella avium (strain 197N)</name>
    <dbReference type="NCBI Taxonomy" id="360910"/>
    <lineage>
        <taxon>Bacteria</taxon>
        <taxon>Pseudomonadati</taxon>
        <taxon>Pseudomonadota</taxon>
        <taxon>Betaproteobacteria</taxon>
        <taxon>Burkholderiales</taxon>
        <taxon>Alcaligenaceae</taxon>
        <taxon>Bordetella</taxon>
    </lineage>
</organism>
<feature type="chain" id="PRO_1000056015" description="Large ribosomal subunit protein uL30">
    <location>
        <begin position="1"/>
        <end position="61"/>
    </location>
</feature>
<proteinExistence type="inferred from homology"/>
<dbReference type="EMBL" id="AM167904">
    <property type="protein sequence ID" value="CAJ47636.1"/>
    <property type="molecule type" value="Genomic_DNA"/>
</dbReference>
<dbReference type="RefSeq" id="WP_012415758.1">
    <property type="nucleotide sequence ID" value="NC_010645.1"/>
</dbReference>
<dbReference type="SMR" id="Q2L263"/>
<dbReference type="STRING" id="360910.BAV0052"/>
<dbReference type="GeneID" id="92936703"/>
<dbReference type="KEGG" id="bav:BAV0052"/>
<dbReference type="eggNOG" id="COG1841">
    <property type="taxonomic scope" value="Bacteria"/>
</dbReference>
<dbReference type="HOGENOM" id="CLU_131047_2_1_4"/>
<dbReference type="OrthoDB" id="9812790at2"/>
<dbReference type="Proteomes" id="UP000001977">
    <property type="component" value="Chromosome"/>
</dbReference>
<dbReference type="GO" id="GO:0022625">
    <property type="term" value="C:cytosolic large ribosomal subunit"/>
    <property type="evidence" value="ECO:0007669"/>
    <property type="project" value="TreeGrafter"/>
</dbReference>
<dbReference type="GO" id="GO:0003735">
    <property type="term" value="F:structural constituent of ribosome"/>
    <property type="evidence" value="ECO:0007669"/>
    <property type="project" value="InterPro"/>
</dbReference>
<dbReference type="GO" id="GO:0006412">
    <property type="term" value="P:translation"/>
    <property type="evidence" value="ECO:0007669"/>
    <property type="project" value="UniProtKB-UniRule"/>
</dbReference>
<dbReference type="CDD" id="cd01658">
    <property type="entry name" value="Ribosomal_L30"/>
    <property type="match status" value="1"/>
</dbReference>
<dbReference type="FunFam" id="3.30.1390.20:FF:000001">
    <property type="entry name" value="50S ribosomal protein L30"/>
    <property type="match status" value="1"/>
</dbReference>
<dbReference type="Gene3D" id="3.30.1390.20">
    <property type="entry name" value="Ribosomal protein L30, ferredoxin-like fold domain"/>
    <property type="match status" value="1"/>
</dbReference>
<dbReference type="HAMAP" id="MF_01371_B">
    <property type="entry name" value="Ribosomal_uL30_B"/>
    <property type="match status" value="1"/>
</dbReference>
<dbReference type="InterPro" id="IPR036919">
    <property type="entry name" value="Ribo_uL30_ferredoxin-like_sf"/>
</dbReference>
<dbReference type="InterPro" id="IPR005996">
    <property type="entry name" value="Ribosomal_uL30_bac-type"/>
</dbReference>
<dbReference type="InterPro" id="IPR018038">
    <property type="entry name" value="Ribosomal_uL30_CS"/>
</dbReference>
<dbReference type="InterPro" id="IPR016082">
    <property type="entry name" value="Ribosomal_uL30_ferredoxin-like"/>
</dbReference>
<dbReference type="NCBIfam" id="TIGR01308">
    <property type="entry name" value="rpmD_bact"/>
    <property type="match status" value="1"/>
</dbReference>
<dbReference type="PANTHER" id="PTHR15892:SF2">
    <property type="entry name" value="LARGE RIBOSOMAL SUBUNIT PROTEIN UL30M"/>
    <property type="match status" value="1"/>
</dbReference>
<dbReference type="PANTHER" id="PTHR15892">
    <property type="entry name" value="MITOCHONDRIAL RIBOSOMAL PROTEIN L30"/>
    <property type="match status" value="1"/>
</dbReference>
<dbReference type="Pfam" id="PF00327">
    <property type="entry name" value="Ribosomal_L30"/>
    <property type="match status" value="1"/>
</dbReference>
<dbReference type="PIRSF" id="PIRSF002211">
    <property type="entry name" value="Ribosomal_L30_bac-type"/>
    <property type="match status" value="1"/>
</dbReference>
<dbReference type="SUPFAM" id="SSF55129">
    <property type="entry name" value="Ribosomal protein L30p/L7e"/>
    <property type="match status" value="1"/>
</dbReference>
<dbReference type="PROSITE" id="PS00634">
    <property type="entry name" value="RIBOSOMAL_L30"/>
    <property type="match status" value="1"/>
</dbReference>
<sequence>MAQKQIKVTLVRSVIGTKQSHRDTVRGLGLRGLNSSRVLIDTPEVRGMLRKVDYLVTVSEA</sequence>
<protein>
    <recommendedName>
        <fullName evidence="1">Large ribosomal subunit protein uL30</fullName>
    </recommendedName>
    <alternativeName>
        <fullName evidence="2">50S ribosomal protein L30</fullName>
    </alternativeName>
</protein>
<keyword id="KW-1185">Reference proteome</keyword>
<keyword id="KW-0687">Ribonucleoprotein</keyword>
<keyword id="KW-0689">Ribosomal protein</keyword>
<accession>Q2L263</accession>
<evidence type="ECO:0000255" key="1">
    <source>
        <dbReference type="HAMAP-Rule" id="MF_01371"/>
    </source>
</evidence>
<evidence type="ECO:0000305" key="2"/>
<reference key="1">
    <citation type="journal article" date="2006" name="J. Bacteriol.">
        <title>Comparison of the genome sequence of the poultry pathogen Bordetella avium with those of B. bronchiseptica, B. pertussis, and B. parapertussis reveals extensive diversity in surface structures associated with host interaction.</title>
        <authorList>
            <person name="Sebaihia M."/>
            <person name="Preston A."/>
            <person name="Maskell D.J."/>
            <person name="Kuzmiak H."/>
            <person name="Connell T.D."/>
            <person name="King N.D."/>
            <person name="Orndorff P.E."/>
            <person name="Miyamoto D.M."/>
            <person name="Thomson N.R."/>
            <person name="Harris D."/>
            <person name="Goble A."/>
            <person name="Lord A."/>
            <person name="Murphy L."/>
            <person name="Quail M.A."/>
            <person name="Rutter S."/>
            <person name="Squares R."/>
            <person name="Squares S."/>
            <person name="Woodward J."/>
            <person name="Parkhill J."/>
            <person name="Temple L.M."/>
        </authorList>
    </citation>
    <scope>NUCLEOTIDE SEQUENCE [LARGE SCALE GENOMIC DNA]</scope>
    <source>
        <strain>197N</strain>
    </source>
</reference>
<comment type="subunit">
    <text evidence="1">Part of the 50S ribosomal subunit.</text>
</comment>
<comment type="similarity">
    <text evidence="1">Belongs to the universal ribosomal protein uL30 family.</text>
</comment>
<gene>
    <name evidence="1" type="primary">rpmD</name>
    <name type="ordered locus">BAV0052</name>
</gene>
<name>RL30_BORA1</name>